<comment type="function">
    <text evidence="1">May be involved in the proteolytic processing of a quorum sensing system signal molecule precursor.</text>
</comment>
<comment type="subcellular location">
    <subcellularLocation>
        <location evidence="1">Cell membrane</location>
        <topology evidence="1">Multi-pass membrane protein</topology>
    </subcellularLocation>
</comment>
<comment type="similarity">
    <text evidence="1">Belongs to the AgrB family.</text>
</comment>
<reference key="1">
    <citation type="journal article" date="2006" name="Genome Res.">
        <title>Skewed genomic variability in strains of the toxigenic bacterial pathogen, Clostridium perfringens.</title>
        <authorList>
            <person name="Myers G.S.A."/>
            <person name="Rasko D.A."/>
            <person name="Cheung J.K."/>
            <person name="Ravel J."/>
            <person name="Seshadri R."/>
            <person name="DeBoy R.T."/>
            <person name="Ren Q."/>
            <person name="Varga J."/>
            <person name="Awad M.M."/>
            <person name="Brinkac L.M."/>
            <person name="Daugherty S.C."/>
            <person name="Haft D.H."/>
            <person name="Dodson R.J."/>
            <person name="Madupu R."/>
            <person name="Nelson W.C."/>
            <person name="Rosovitz M.J."/>
            <person name="Sullivan S.A."/>
            <person name="Khouri H."/>
            <person name="Dimitrov G.I."/>
            <person name="Watkins K.L."/>
            <person name="Mulligan S."/>
            <person name="Benton J."/>
            <person name="Radune D."/>
            <person name="Fisher D.J."/>
            <person name="Atkins H.S."/>
            <person name="Hiscox T."/>
            <person name="Jost B.H."/>
            <person name="Billington S.J."/>
            <person name="Songer J.G."/>
            <person name="McClane B.A."/>
            <person name="Titball R.W."/>
            <person name="Rood J.I."/>
            <person name="Melville S.B."/>
            <person name="Paulsen I.T."/>
        </authorList>
    </citation>
    <scope>NUCLEOTIDE SEQUENCE [LARGE SCALE GENOMIC DNA]</scope>
    <source>
        <strain>SM101 / Type A</strain>
    </source>
</reference>
<protein>
    <recommendedName>
        <fullName evidence="1">Putative AgrB-like protein</fullName>
        <ecNumber evidence="1">3.4.-.-</ecNumber>
    </recommendedName>
</protein>
<organism>
    <name type="scientific">Clostridium perfringens (strain SM101 / Type A)</name>
    <dbReference type="NCBI Taxonomy" id="289380"/>
    <lineage>
        <taxon>Bacteria</taxon>
        <taxon>Bacillati</taxon>
        <taxon>Bacillota</taxon>
        <taxon>Clostridia</taxon>
        <taxon>Eubacteriales</taxon>
        <taxon>Clostridiaceae</taxon>
        <taxon>Clostridium</taxon>
    </lineage>
</organism>
<proteinExistence type="inferred from homology"/>
<accession>Q0SSQ8</accession>
<evidence type="ECO:0000255" key="1">
    <source>
        <dbReference type="HAMAP-Rule" id="MF_00784"/>
    </source>
</evidence>
<sequence length="214" mass="24255">MIENLSKLISEKVSSELNYDNERKEIIQYGTYALIQTLISIISVFIIGLLFNIALEALIFLFTASILRKYSGGAHSESSNVCTLLGIIISICIGFLVKSSFFTKMNFEIIVFIGIVIFVFGYFIVFKFAPVDTKNKPIKTEKKKKRMKKGSLKILTIYLFIEILSIILYYNLGWSLVKSVMLSIILGVAWQCITLTYIGNILLKTIDSFTNKLL</sequence>
<name>AGRB_CLOPS</name>
<feature type="chain" id="PRO_1000046836" description="Putative AgrB-like protein">
    <location>
        <begin position="1"/>
        <end position="214"/>
    </location>
</feature>
<feature type="transmembrane region" description="Helical" evidence="1">
    <location>
        <begin position="41"/>
        <end position="61"/>
    </location>
</feature>
<feature type="transmembrane region" description="Helical" evidence="1">
    <location>
        <begin position="82"/>
        <end position="102"/>
    </location>
</feature>
<feature type="transmembrane region" description="Helical" evidence="1">
    <location>
        <begin position="109"/>
        <end position="129"/>
    </location>
</feature>
<feature type="transmembrane region" description="Helical" evidence="1">
    <location>
        <begin position="154"/>
        <end position="174"/>
    </location>
</feature>
<feature type="transmembrane region" description="Helical" evidence="1">
    <location>
        <begin position="182"/>
        <end position="202"/>
    </location>
</feature>
<dbReference type="EC" id="3.4.-.-" evidence="1"/>
<dbReference type="EMBL" id="CP000312">
    <property type="protein sequence ID" value="ABG86149.1"/>
    <property type="molecule type" value="Genomic_DNA"/>
</dbReference>
<dbReference type="RefSeq" id="WP_011592481.1">
    <property type="nucleotide sequence ID" value="NC_008262.1"/>
</dbReference>
<dbReference type="SMR" id="Q0SSQ8"/>
<dbReference type="KEGG" id="cpr:CPR_1532"/>
<dbReference type="BioCyc" id="CPER289380:GI76-1544-MONOMER"/>
<dbReference type="Proteomes" id="UP000001824">
    <property type="component" value="Chromosome"/>
</dbReference>
<dbReference type="GO" id="GO:0005886">
    <property type="term" value="C:plasma membrane"/>
    <property type="evidence" value="ECO:0007669"/>
    <property type="project" value="UniProtKB-SubCell"/>
</dbReference>
<dbReference type="GO" id="GO:0008233">
    <property type="term" value="F:peptidase activity"/>
    <property type="evidence" value="ECO:0007669"/>
    <property type="project" value="UniProtKB-UniRule"/>
</dbReference>
<dbReference type="GO" id="GO:0006508">
    <property type="term" value="P:proteolysis"/>
    <property type="evidence" value="ECO:0007669"/>
    <property type="project" value="UniProtKB-KW"/>
</dbReference>
<dbReference type="GO" id="GO:0009372">
    <property type="term" value="P:quorum sensing"/>
    <property type="evidence" value="ECO:0007669"/>
    <property type="project" value="UniProtKB-UniRule"/>
</dbReference>
<dbReference type="HAMAP" id="MF_00784">
    <property type="entry name" value="AgrB"/>
    <property type="match status" value="1"/>
</dbReference>
<dbReference type="InterPro" id="IPR006741">
    <property type="entry name" value="AgrB"/>
</dbReference>
<dbReference type="InterPro" id="IPR036259">
    <property type="entry name" value="MFS_trans_sf"/>
</dbReference>
<dbReference type="Pfam" id="PF04647">
    <property type="entry name" value="AgrB"/>
    <property type="match status" value="1"/>
</dbReference>
<dbReference type="SMART" id="SM00793">
    <property type="entry name" value="AgrB"/>
    <property type="match status" value="1"/>
</dbReference>
<dbReference type="SUPFAM" id="SSF103473">
    <property type="entry name" value="MFS general substrate transporter"/>
    <property type="match status" value="1"/>
</dbReference>
<gene>
    <name type="ordered locus">CPR_1532</name>
</gene>
<keyword id="KW-1003">Cell membrane</keyword>
<keyword id="KW-0378">Hydrolase</keyword>
<keyword id="KW-0472">Membrane</keyword>
<keyword id="KW-0645">Protease</keyword>
<keyword id="KW-0673">Quorum sensing</keyword>
<keyword id="KW-0812">Transmembrane</keyword>
<keyword id="KW-1133">Transmembrane helix</keyword>